<dbReference type="EC" id="1.1.1.-"/>
<dbReference type="EMBL" id="D84432">
    <property type="protein sequence ID" value="BAA12439.1"/>
    <property type="molecule type" value="Genomic_DNA"/>
</dbReference>
<dbReference type="EMBL" id="AL009126">
    <property type="protein sequence ID" value="CAB14514.1"/>
    <property type="molecule type" value="Genomic_DNA"/>
</dbReference>
<dbReference type="PIR" id="G69950">
    <property type="entry name" value="G69950"/>
</dbReference>
<dbReference type="RefSeq" id="NP_390450.1">
    <property type="nucleotide sequence ID" value="NC_000964.3"/>
</dbReference>
<dbReference type="SMR" id="P54448"/>
<dbReference type="FunCoup" id="P54448">
    <property type="interactions" value="158"/>
</dbReference>
<dbReference type="STRING" id="224308.BSU25730"/>
<dbReference type="PaxDb" id="224308-BSU25730"/>
<dbReference type="EnsemblBacteria" id="CAB14514">
    <property type="protein sequence ID" value="CAB14514"/>
    <property type="gene ID" value="BSU_25730"/>
</dbReference>
<dbReference type="GeneID" id="937809"/>
<dbReference type="KEGG" id="bsu:BSU25730"/>
<dbReference type="PATRIC" id="fig|224308.179.peg.2798"/>
<dbReference type="eggNOG" id="COG1023">
    <property type="taxonomic scope" value="Bacteria"/>
</dbReference>
<dbReference type="InParanoid" id="P54448"/>
<dbReference type="OrthoDB" id="9804542at2"/>
<dbReference type="PhylomeDB" id="P54448"/>
<dbReference type="BioCyc" id="BSUB:BSU25730-MONOMER"/>
<dbReference type="Proteomes" id="UP000001570">
    <property type="component" value="Chromosome"/>
</dbReference>
<dbReference type="GO" id="GO:0050661">
    <property type="term" value="F:NADP binding"/>
    <property type="evidence" value="ECO:0007669"/>
    <property type="project" value="InterPro"/>
</dbReference>
<dbReference type="GO" id="GO:0004616">
    <property type="term" value="F:phosphogluconate dehydrogenase (decarboxylating) activity"/>
    <property type="evidence" value="ECO:0007669"/>
    <property type="project" value="InterPro"/>
</dbReference>
<dbReference type="GO" id="GO:0019521">
    <property type="term" value="P:D-gluconate metabolic process"/>
    <property type="evidence" value="ECO:0007669"/>
    <property type="project" value="UniProtKB-KW"/>
</dbReference>
<dbReference type="GO" id="GO:0016054">
    <property type="term" value="P:organic acid catabolic process"/>
    <property type="evidence" value="ECO:0007669"/>
    <property type="project" value="UniProtKB-ARBA"/>
</dbReference>
<dbReference type="GO" id="GO:0006098">
    <property type="term" value="P:pentose-phosphate shunt"/>
    <property type="evidence" value="ECO:0007669"/>
    <property type="project" value="InterPro"/>
</dbReference>
<dbReference type="Gene3D" id="1.10.1040.10">
    <property type="entry name" value="N-(1-d-carboxylethyl)-l-norvaline Dehydrogenase, domain 2"/>
    <property type="match status" value="1"/>
</dbReference>
<dbReference type="Gene3D" id="3.40.50.720">
    <property type="entry name" value="NAD(P)-binding Rossmann-like Domain"/>
    <property type="match status" value="1"/>
</dbReference>
<dbReference type="InterPro" id="IPR008927">
    <property type="entry name" value="6-PGluconate_DH-like_C_sf"/>
</dbReference>
<dbReference type="InterPro" id="IPR004849">
    <property type="entry name" value="6DGDH_YqeC"/>
</dbReference>
<dbReference type="InterPro" id="IPR013328">
    <property type="entry name" value="6PGD_dom2"/>
</dbReference>
<dbReference type="InterPro" id="IPR006114">
    <property type="entry name" value="6PGDH_C"/>
</dbReference>
<dbReference type="InterPro" id="IPR006115">
    <property type="entry name" value="6PGDH_NADP-bd"/>
</dbReference>
<dbReference type="InterPro" id="IPR006184">
    <property type="entry name" value="6PGdom_BS"/>
</dbReference>
<dbReference type="InterPro" id="IPR036291">
    <property type="entry name" value="NAD(P)-bd_dom_sf"/>
</dbReference>
<dbReference type="InterPro" id="IPR006183">
    <property type="entry name" value="Pgluconate_DH"/>
</dbReference>
<dbReference type="NCBIfam" id="TIGR00872">
    <property type="entry name" value="gnd_rel"/>
    <property type="match status" value="1"/>
</dbReference>
<dbReference type="NCBIfam" id="NF007161">
    <property type="entry name" value="PRK09599.1"/>
    <property type="match status" value="1"/>
</dbReference>
<dbReference type="PANTHER" id="PTHR11811">
    <property type="entry name" value="6-PHOSPHOGLUCONATE DEHYDROGENASE"/>
    <property type="match status" value="1"/>
</dbReference>
<dbReference type="Pfam" id="PF00393">
    <property type="entry name" value="6PGD"/>
    <property type="match status" value="1"/>
</dbReference>
<dbReference type="Pfam" id="PF03446">
    <property type="entry name" value="NAD_binding_2"/>
    <property type="match status" value="1"/>
</dbReference>
<dbReference type="PRINTS" id="PR00076">
    <property type="entry name" value="6PGDHDRGNASE"/>
</dbReference>
<dbReference type="SMART" id="SM01350">
    <property type="entry name" value="6PGD"/>
    <property type="match status" value="1"/>
</dbReference>
<dbReference type="SUPFAM" id="SSF48179">
    <property type="entry name" value="6-phosphogluconate dehydrogenase C-terminal domain-like"/>
    <property type="match status" value="1"/>
</dbReference>
<dbReference type="SUPFAM" id="SSF51735">
    <property type="entry name" value="NAD(P)-binding Rossmann-fold domains"/>
    <property type="match status" value="1"/>
</dbReference>
<dbReference type="PROSITE" id="PS00461">
    <property type="entry name" value="6PGD"/>
    <property type="match status" value="1"/>
</dbReference>
<comment type="function">
    <text>May act as NAD-dependent 6-P-gluconate dehydrogenase.</text>
</comment>
<comment type="similarity">
    <text evidence="2">Belongs to the 6-phosphogluconate dehydrogenase family.</text>
</comment>
<gene>
    <name type="primary">yqeC</name>
    <name type="ordered locus">BSU25730</name>
</gene>
<sequence length="297" mass="32769">MKIGLIGLGKMGINIGKQFIDRNHQVVGYDVNQAAVDELKAYGAEGTTNLKEFISLLHPPRILWVMVPHGIVDAVLRDVSPLLSKGDMIIEAGNSHYKESIRRYNQMKEAGIHYLDAGTSGGMEGARHGACFMVGGDHEAWEIVEPLFRDTAVENGYLYAGEAGSGHFLKMIHNGIEYGMMAAIGEGFEVLENSQFDFDYEKVARVWNHGSVIRSWLMGLTERAFAKDAKLDQIKGIMHSSGEGKWTVETALDLQTATPVIAMSLMMRYRSLTDDTFTGKVVAALRNEFGGHATEKK</sequence>
<reference key="1">
    <citation type="journal article" date="1996" name="Microbiology">
        <title>Systematic sequencing of the 283 kb 210 degrees-232 degrees region of the Bacillus subtilis genome containing the skin element and many sporulation genes.</title>
        <authorList>
            <person name="Mizuno M."/>
            <person name="Masuda S."/>
            <person name="Takemaru K."/>
            <person name="Hosono S."/>
            <person name="Sato T."/>
            <person name="Takeuchi M."/>
            <person name="Kobayashi Y."/>
        </authorList>
    </citation>
    <scope>NUCLEOTIDE SEQUENCE [GENOMIC DNA]</scope>
    <source>
        <strain>168 / JH642</strain>
    </source>
</reference>
<reference key="2">
    <citation type="journal article" date="1997" name="Nature">
        <title>The complete genome sequence of the Gram-positive bacterium Bacillus subtilis.</title>
        <authorList>
            <person name="Kunst F."/>
            <person name="Ogasawara N."/>
            <person name="Moszer I."/>
            <person name="Albertini A.M."/>
            <person name="Alloni G."/>
            <person name="Azevedo V."/>
            <person name="Bertero M.G."/>
            <person name="Bessieres P."/>
            <person name="Bolotin A."/>
            <person name="Borchert S."/>
            <person name="Borriss R."/>
            <person name="Boursier L."/>
            <person name="Brans A."/>
            <person name="Braun M."/>
            <person name="Brignell S.C."/>
            <person name="Bron S."/>
            <person name="Brouillet S."/>
            <person name="Bruschi C.V."/>
            <person name="Caldwell B."/>
            <person name="Capuano V."/>
            <person name="Carter N.M."/>
            <person name="Choi S.-K."/>
            <person name="Codani J.-J."/>
            <person name="Connerton I.F."/>
            <person name="Cummings N.J."/>
            <person name="Daniel R.A."/>
            <person name="Denizot F."/>
            <person name="Devine K.M."/>
            <person name="Duesterhoeft A."/>
            <person name="Ehrlich S.D."/>
            <person name="Emmerson P.T."/>
            <person name="Entian K.-D."/>
            <person name="Errington J."/>
            <person name="Fabret C."/>
            <person name="Ferrari E."/>
            <person name="Foulger D."/>
            <person name="Fritz C."/>
            <person name="Fujita M."/>
            <person name="Fujita Y."/>
            <person name="Fuma S."/>
            <person name="Galizzi A."/>
            <person name="Galleron N."/>
            <person name="Ghim S.-Y."/>
            <person name="Glaser P."/>
            <person name="Goffeau A."/>
            <person name="Golightly E.J."/>
            <person name="Grandi G."/>
            <person name="Guiseppi G."/>
            <person name="Guy B.J."/>
            <person name="Haga K."/>
            <person name="Haiech J."/>
            <person name="Harwood C.R."/>
            <person name="Henaut A."/>
            <person name="Hilbert H."/>
            <person name="Holsappel S."/>
            <person name="Hosono S."/>
            <person name="Hullo M.-F."/>
            <person name="Itaya M."/>
            <person name="Jones L.-M."/>
            <person name="Joris B."/>
            <person name="Karamata D."/>
            <person name="Kasahara Y."/>
            <person name="Klaerr-Blanchard M."/>
            <person name="Klein C."/>
            <person name="Kobayashi Y."/>
            <person name="Koetter P."/>
            <person name="Koningstein G."/>
            <person name="Krogh S."/>
            <person name="Kumano M."/>
            <person name="Kurita K."/>
            <person name="Lapidus A."/>
            <person name="Lardinois S."/>
            <person name="Lauber J."/>
            <person name="Lazarevic V."/>
            <person name="Lee S.-M."/>
            <person name="Levine A."/>
            <person name="Liu H."/>
            <person name="Masuda S."/>
            <person name="Mauel C."/>
            <person name="Medigue C."/>
            <person name="Medina N."/>
            <person name="Mellado R.P."/>
            <person name="Mizuno M."/>
            <person name="Moestl D."/>
            <person name="Nakai S."/>
            <person name="Noback M."/>
            <person name="Noone D."/>
            <person name="O'Reilly M."/>
            <person name="Ogawa K."/>
            <person name="Ogiwara A."/>
            <person name="Oudega B."/>
            <person name="Park S.-H."/>
            <person name="Parro V."/>
            <person name="Pohl T.M."/>
            <person name="Portetelle D."/>
            <person name="Porwollik S."/>
            <person name="Prescott A.M."/>
            <person name="Presecan E."/>
            <person name="Pujic P."/>
            <person name="Purnelle B."/>
            <person name="Rapoport G."/>
            <person name="Rey M."/>
            <person name="Reynolds S."/>
            <person name="Rieger M."/>
            <person name="Rivolta C."/>
            <person name="Rocha E."/>
            <person name="Roche B."/>
            <person name="Rose M."/>
            <person name="Sadaie Y."/>
            <person name="Sato T."/>
            <person name="Scanlan E."/>
            <person name="Schleich S."/>
            <person name="Schroeter R."/>
            <person name="Scoffone F."/>
            <person name="Sekiguchi J."/>
            <person name="Sekowska A."/>
            <person name="Seror S.J."/>
            <person name="Serror P."/>
            <person name="Shin B.-S."/>
            <person name="Soldo B."/>
            <person name="Sorokin A."/>
            <person name="Tacconi E."/>
            <person name="Takagi T."/>
            <person name="Takahashi H."/>
            <person name="Takemaru K."/>
            <person name="Takeuchi M."/>
            <person name="Tamakoshi A."/>
            <person name="Tanaka T."/>
            <person name="Terpstra P."/>
            <person name="Tognoni A."/>
            <person name="Tosato V."/>
            <person name="Uchiyama S."/>
            <person name="Vandenbol M."/>
            <person name="Vannier F."/>
            <person name="Vassarotti A."/>
            <person name="Viari A."/>
            <person name="Wambutt R."/>
            <person name="Wedler E."/>
            <person name="Wedler H."/>
            <person name="Weitzenegger T."/>
            <person name="Winters P."/>
            <person name="Wipat A."/>
            <person name="Yamamoto H."/>
            <person name="Yamane K."/>
            <person name="Yasumoto K."/>
            <person name="Yata K."/>
            <person name="Yoshida K."/>
            <person name="Yoshikawa H.-F."/>
            <person name="Zumstein E."/>
            <person name="Yoshikawa H."/>
            <person name="Danchin A."/>
        </authorList>
    </citation>
    <scope>NUCLEOTIDE SEQUENCE [LARGE SCALE GENOMIC DNA]</scope>
    <source>
        <strain>168</strain>
    </source>
</reference>
<reference key="3">
    <citation type="journal article" date="2004" name="J. Bacteriol.">
        <title>The Bacillus subtilis yqjI gene encodes the NADP+-dependent 6-P-gluconate dehydrogenase in the pentose phosphate pathway.</title>
        <authorList>
            <person name="Zamboni N."/>
            <person name="Fischer E."/>
            <person name="Laudert D."/>
            <person name="Aymerich S."/>
            <person name="Hohmann H.P."/>
            <person name="Sauer U."/>
        </authorList>
    </citation>
    <scope>PROPOSED FUNCTION</scope>
</reference>
<feature type="chain" id="PRO_0000090077" description="Putative 6-phosphogluconate dehydrogenase YqeC">
    <location>
        <begin position="1"/>
        <end position="297"/>
    </location>
</feature>
<feature type="active site" description="Proton acceptor" evidence="1">
    <location>
        <position position="170"/>
    </location>
</feature>
<feature type="active site" description="Proton donor" evidence="1">
    <location>
        <position position="177"/>
    </location>
</feature>
<feature type="binding site" evidence="1">
    <location>
        <begin position="7"/>
        <end position="12"/>
    </location>
    <ligand>
        <name>NAD(+)</name>
        <dbReference type="ChEBI" id="CHEBI:57540"/>
    </ligand>
</feature>
<feature type="binding site" evidence="1">
    <location>
        <position position="94"/>
    </location>
    <ligand>
        <name>NAD(+)</name>
        <dbReference type="ChEBI" id="CHEBI:57540"/>
    </ligand>
</feature>
<feature type="binding site" evidence="1">
    <location>
        <position position="94"/>
    </location>
    <ligand>
        <name>substrate</name>
    </ligand>
</feature>
<feature type="binding site" evidence="1">
    <location>
        <begin position="120"/>
        <end position="122"/>
    </location>
    <ligand>
        <name>substrate</name>
    </ligand>
</feature>
<feature type="binding site" evidence="1">
    <location>
        <begin position="173"/>
        <end position="174"/>
    </location>
    <ligand>
        <name>substrate</name>
    </ligand>
</feature>
<feature type="binding site" evidence="1">
    <location>
        <position position="178"/>
    </location>
    <ligand>
        <name>substrate</name>
    </ligand>
</feature>
<feature type="binding site" evidence="1">
    <location>
        <position position="268"/>
    </location>
    <ligand>
        <name>substrate</name>
    </ligand>
</feature>
<evidence type="ECO:0000250" key="1"/>
<evidence type="ECO:0000305" key="2"/>
<organism>
    <name type="scientific">Bacillus subtilis (strain 168)</name>
    <dbReference type="NCBI Taxonomy" id="224308"/>
    <lineage>
        <taxon>Bacteria</taxon>
        <taxon>Bacillati</taxon>
        <taxon>Bacillota</taxon>
        <taxon>Bacilli</taxon>
        <taxon>Bacillales</taxon>
        <taxon>Bacillaceae</taxon>
        <taxon>Bacillus</taxon>
    </lineage>
</organism>
<name>YQEC_BACSU</name>
<keyword id="KW-0311">Gluconate utilization</keyword>
<keyword id="KW-0520">NAD</keyword>
<keyword id="KW-0560">Oxidoreductase</keyword>
<keyword id="KW-1185">Reference proteome</keyword>
<proteinExistence type="inferred from homology"/>
<accession>P54448</accession>
<protein>
    <recommendedName>
        <fullName>Putative 6-phosphogluconate dehydrogenase YqeC</fullName>
        <ecNumber>1.1.1.-</ecNumber>
    </recommendedName>
</protein>